<name>MNMG_RHOPB</name>
<evidence type="ECO:0000255" key="1">
    <source>
        <dbReference type="HAMAP-Rule" id="MF_00129"/>
    </source>
</evidence>
<protein>
    <recommendedName>
        <fullName evidence="1">tRNA uridine 5-carboxymethylaminomethyl modification enzyme MnmG</fullName>
    </recommendedName>
    <alternativeName>
        <fullName evidence="1">Glucose-inhibited division protein A</fullName>
    </alternativeName>
</protein>
<keyword id="KW-0963">Cytoplasm</keyword>
<keyword id="KW-0274">FAD</keyword>
<keyword id="KW-0285">Flavoprotein</keyword>
<keyword id="KW-0520">NAD</keyword>
<keyword id="KW-0819">tRNA processing</keyword>
<gene>
    <name evidence="1" type="primary">mnmG</name>
    <name evidence="1" type="synonym">gidA</name>
    <name type="ordered locus">RPC_0290</name>
</gene>
<dbReference type="EMBL" id="CP000301">
    <property type="protein sequence ID" value="ABD85865.1"/>
    <property type="molecule type" value="Genomic_DNA"/>
</dbReference>
<dbReference type="SMR" id="Q21CM1"/>
<dbReference type="STRING" id="316056.RPC_0290"/>
<dbReference type="KEGG" id="rpc:RPC_0290"/>
<dbReference type="eggNOG" id="COG0445">
    <property type="taxonomic scope" value="Bacteria"/>
</dbReference>
<dbReference type="HOGENOM" id="CLU_007831_2_2_5"/>
<dbReference type="OrthoDB" id="9815560at2"/>
<dbReference type="GO" id="GO:0005829">
    <property type="term" value="C:cytosol"/>
    <property type="evidence" value="ECO:0007669"/>
    <property type="project" value="TreeGrafter"/>
</dbReference>
<dbReference type="GO" id="GO:0050660">
    <property type="term" value="F:flavin adenine dinucleotide binding"/>
    <property type="evidence" value="ECO:0007669"/>
    <property type="project" value="UniProtKB-UniRule"/>
</dbReference>
<dbReference type="GO" id="GO:0030488">
    <property type="term" value="P:tRNA methylation"/>
    <property type="evidence" value="ECO:0007669"/>
    <property type="project" value="TreeGrafter"/>
</dbReference>
<dbReference type="GO" id="GO:0002098">
    <property type="term" value="P:tRNA wobble uridine modification"/>
    <property type="evidence" value="ECO:0007669"/>
    <property type="project" value="InterPro"/>
</dbReference>
<dbReference type="FunFam" id="3.50.50.60:FF:000145">
    <property type="entry name" value="tRNA uridine 5-carboxymethylaminomethyl modification enzyme"/>
    <property type="match status" value="1"/>
</dbReference>
<dbReference type="FunFam" id="3.50.50.60:FF:000002">
    <property type="entry name" value="tRNA uridine 5-carboxymethylaminomethyl modification enzyme MnmG"/>
    <property type="match status" value="1"/>
</dbReference>
<dbReference type="Gene3D" id="3.50.50.60">
    <property type="entry name" value="FAD/NAD(P)-binding domain"/>
    <property type="match status" value="2"/>
</dbReference>
<dbReference type="Gene3D" id="1.10.150.570">
    <property type="entry name" value="GidA associated domain, C-terminal subdomain"/>
    <property type="match status" value="1"/>
</dbReference>
<dbReference type="HAMAP" id="MF_00129">
    <property type="entry name" value="MnmG_GidA"/>
    <property type="match status" value="1"/>
</dbReference>
<dbReference type="InterPro" id="IPR036188">
    <property type="entry name" value="FAD/NAD-bd_sf"/>
</dbReference>
<dbReference type="InterPro" id="IPR049312">
    <property type="entry name" value="GIDA_C_N"/>
</dbReference>
<dbReference type="InterPro" id="IPR004416">
    <property type="entry name" value="MnmG"/>
</dbReference>
<dbReference type="InterPro" id="IPR002218">
    <property type="entry name" value="MnmG-rel"/>
</dbReference>
<dbReference type="InterPro" id="IPR020595">
    <property type="entry name" value="MnmG-rel_CS"/>
</dbReference>
<dbReference type="InterPro" id="IPR026904">
    <property type="entry name" value="MnmG_C"/>
</dbReference>
<dbReference type="InterPro" id="IPR047001">
    <property type="entry name" value="MnmG_C_subdom"/>
</dbReference>
<dbReference type="InterPro" id="IPR044920">
    <property type="entry name" value="MnmG_C_subdom_sf"/>
</dbReference>
<dbReference type="InterPro" id="IPR040131">
    <property type="entry name" value="MnmG_N"/>
</dbReference>
<dbReference type="NCBIfam" id="TIGR00136">
    <property type="entry name" value="mnmG_gidA"/>
    <property type="match status" value="1"/>
</dbReference>
<dbReference type="PANTHER" id="PTHR11806">
    <property type="entry name" value="GLUCOSE INHIBITED DIVISION PROTEIN A"/>
    <property type="match status" value="1"/>
</dbReference>
<dbReference type="PANTHER" id="PTHR11806:SF0">
    <property type="entry name" value="PROTEIN MTO1 HOMOLOG, MITOCHONDRIAL"/>
    <property type="match status" value="1"/>
</dbReference>
<dbReference type="Pfam" id="PF01134">
    <property type="entry name" value="GIDA"/>
    <property type="match status" value="1"/>
</dbReference>
<dbReference type="Pfam" id="PF21680">
    <property type="entry name" value="GIDA_C_1st"/>
    <property type="match status" value="1"/>
</dbReference>
<dbReference type="Pfam" id="PF13932">
    <property type="entry name" value="SAM_GIDA_C"/>
    <property type="match status" value="1"/>
</dbReference>
<dbReference type="PRINTS" id="PR00411">
    <property type="entry name" value="PNDRDTASEI"/>
</dbReference>
<dbReference type="SMART" id="SM01228">
    <property type="entry name" value="GIDA_assoc_3"/>
    <property type="match status" value="1"/>
</dbReference>
<dbReference type="SUPFAM" id="SSF51905">
    <property type="entry name" value="FAD/NAD(P)-binding domain"/>
    <property type="match status" value="1"/>
</dbReference>
<dbReference type="PROSITE" id="PS01280">
    <property type="entry name" value="GIDA_1"/>
    <property type="match status" value="1"/>
</dbReference>
<dbReference type="PROSITE" id="PS01281">
    <property type="entry name" value="GIDA_2"/>
    <property type="match status" value="1"/>
</dbReference>
<proteinExistence type="inferred from homology"/>
<feature type="chain" id="PRO_1000016659" description="tRNA uridine 5-carboxymethylaminomethyl modification enzyme MnmG">
    <location>
        <begin position="1"/>
        <end position="625"/>
    </location>
</feature>
<feature type="binding site" evidence="1">
    <location>
        <begin position="11"/>
        <end position="16"/>
    </location>
    <ligand>
        <name>FAD</name>
        <dbReference type="ChEBI" id="CHEBI:57692"/>
    </ligand>
</feature>
<feature type="binding site" evidence="1">
    <location>
        <begin position="270"/>
        <end position="284"/>
    </location>
    <ligand>
        <name>NAD(+)</name>
        <dbReference type="ChEBI" id="CHEBI:57540"/>
    </ligand>
</feature>
<accession>Q21CM1</accession>
<sequence length="625" mass="66862">MQTSFDVIVIGGGHAGCEAAAAAARLGATTALVTHRFATVGAMSCNPAIGGLGKGHLVREVDALDGLMGRVADQGGIQFRMLNRRKGPAVRGPRAQADRKLYAAAMQALILATPHLSVVEAEADDLLTSDGRITGIRLADGRELGAGAVVITTGTFLRGLIHLGERSWPAGRIDEAPALGLSKSFERLGFALGRLKTGTPPRLDGRSIDWGAVEMQPGDEPPEPFSVLTEKITNPQIECGITRTTPATHAVIRANVHRSPMYSGQIQSSGPRYCPSIEDKIVRFGDRDGHQIFLEPEGLDDPTVYPNGISTSLPEEVQRAILATIPGLQRTTMLRPGYAIEYDHVDPRELEPTLQAKRLRGLFLAGQINGTTGYEEAAAQGLVAGLNAALLASGGGEIAFDRADGYLGVMIDDLVTRGITEPYRMFTSRAEYRLTLRADNADQRLTGQGIALGCVGAERTEFHTAKMAALAQAKALAQSLAITPSQAAKHGLSLNRDGVRRSAFELLAYPEVDWARVEAIWPELAAIEPSIATHLEIDATYDVYLKRQTADVEGFRRDEGLLLTEIDYALVPGLSNEARGRLEKARPRTVGQAGRLDGLTPAALGILAAYLRRDQRRKPAGSAAG</sequence>
<comment type="function">
    <text evidence="1">NAD-binding protein involved in the addition of a carboxymethylaminomethyl (cmnm) group at the wobble position (U34) of certain tRNAs, forming tRNA-cmnm(5)s(2)U34.</text>
</comment>
<comment type="cofactor">
    <cofactor evidence="1">
        <name>FAD</name>
        <dbReference type="ChEBI" id="CHEBI:57692"/>
    </cofactor>
</comment>
<comment type="subunit">
    <text evidence="1">Homodimer. Heterotetramer of two MnmE and two MnmG subunits.</text>
</comment>
<comment type="subcellular location">
    <subcellularLocation>
        <location evidence="1">Cytoplasm</location>
    </subcellularLocation>
</comment>
<comment type="similarity">
    <text evidence="1">Belongs to the MnmG family.</text>
</comment>
<reference key="1">
    <citation type="submission" date="2006-03" db="EMBL/GenBank/DDBJ databases">
        <title>Complete sequence of Rhodopseudomonas palustris BisB18.</title>
        <authorList>
            <consortium name="US DOE Joint Genome Institute"/>
            <person name="Copeland A."/>
            <person name="Lucas S."/>
            <person name="Lapidus A."/>
            <person name="Barry K."/>
            <person name="Detter J.C."/>
            <person name="Glavina del Rio T."/>
            <person name="Hammon N."/>
            <person name="Israni S."/>
            <person name="Dalin E."/>
            <person name="Tice H."/>
            <person name="Pitluck S."/>
            <person name="Chain P."/>
            <person name="Malfatti S."/>
            <person name="Shin M."/>
            <person name="Vergez L."/>
            <person name="Schmutz J."/>
            <person name="Larimer F."/>
            <person name="Land M."/>
            <person name="Hauser L."/>
            <person name="Pelletier D.A."/>
            <person name="Kyrpides N."/>
            <person name="Anderson I."/>
            <person name="Oda Y."/>
            <person name="Harwood C.S."/>
            <person name="Richardson P."/>
        </authorList>
    </citation>
    <scope>NUCLEOTIDE SEQUENCE [LARGE SCALE GENOMIC DNA]</scope>
    <source>
        <strain>BisB18</strain>
    </source>
</reference>
<organism>
    <name type="scientific">Rhodopseudomonas palustris (strain BisB18)</name>
    <dbReference type="NCBI Taxonomy" id="316056"/>
    <lineage>
        <taxon>Bacteria</taxon>
        <taxon>Pseudomonadati</taxon>
        <taxon>Pseudomonadota</taxon>
        <taxon>Alphaproteobacteria</taxon>
        <taxon>Hyphomicrobiales</taxon>
        <taxon>Nitrobacteraceae</taxon>
        <taxon>Rhodopseudomonas</taxon>
    </lineage>
</organism>